<keyword id="KW-0067">ATP-binding</keyword>
<keyword id="KW-0315">Glutamine amidotransferase</keyword>
<keyword id="KW-0332">GMP biosynthesis</keyword>
<keyword id="KW-0436">Ligase</keyword>
<keyword id="KW-0547">Nucleotide-binding</keyword>
<keyword id="KW-0658">Purine biosynthesis</keyword>
<keyword id="KW-1185">Reference proteome</keyword>
<dbReference type="EC" id="6.3.5.2" evidence="1"/>
<dbReference type="EMBL" id="CP001389">
    <property type="protein sequence ID" value="ACP27373.1"/>
    <property type="molecule type" value="Genomic_DNA"/>
</dbReference>
<dbReference type="RefSeq" id="WP_012710117.1">
    <property type="nucleotide sequence ID" value="NC_012587.1"/>
</dbReference>
<dbReference type="RefSeq" id="YP_002828126.1">
    <property type="nucleotide sequence ID" value="NC_012587.1"/>
</dbReference>
<dbReference type="SMR" id="C3MCS5"/>
<dbReference type="STRING" id="394.NGR_c36520"/>
<dbReference type="KEGG" id="rhi:NGR_c36520"/>
<dbReference type="PATRIC" id="fig|394.7.peg.6504"/>
<dbReference type="eggNOG" id="COG0518">
    <property type="taxonomic scope" value="Bacteria"/>
</dbReference>
<dbReference type="eggNOG" id="COG0519">
    <property type="taxonomic scope" value="Bacteria"/>
</dbReference>
<dbReference type="HOGENOM" id="CLU_014340_0_5_5"/>
<dbReference type="OrthoDB" id="9802219at2"/>
<dbReference type="UniPathway" id="UPA00189">
    <property type="reaction ID" value="UER00296"/>
</dbReference>
<dbReference type="Proteomes" id="UP000001054">
    <property type="component" value="Chromosome"/>
</dbReference>
<dbReference type="GO" id="GO:0005829">
    <property type="term" value="C:cytosol"/>
    <property type="evidence" value="ECO:0007669"/>
    <property type="project" value="TreeGrafter"/>
</dbReference>
<dbReference type="GO" id="GO:0005524">
    <property type="term" value="F:ATP binding"/>
    <property type="evidence" value="ECO:0007669"/>
    <property type="project" value="UniProtKB-UniRule"/>
</dbReference>
<dbReference type="GO" id="GO:0003921">
    <property type="term" value="F:GMP synthase activity"/>
    <property type="evidence" value="ECO:0007669"/>
    <property type="project" value="InterPro"/>
</dbReference>
<dbReference type="CDD" id="cd01742">
    <property type="entry name" value="GATase1_GMP_Synthase"/>
    <property type="match status" value="1"/>
</dbReference>
<dbReference type="CDD" id="cd01997">
    <property type="entry name" value="GMP_synthase_C"/>
    <property type="match status" value="1"/>
</dbReference>
<dbReference type="FunFam" id="3.30.300.10:FF:000002">
    <property type="entry name" value="GMP synthase [glutamine-hydrolyzing]"/>
    <property type="match status" value="1"/>
</dbReference>
<dbReference type="FunFam" id="3.40.50.620:FF:000001">
    <property type="entry name" value="GMP synthase [glutamine-hydrolyzing]"/>
    <property type="match status" value="1"/>
</dbReference>
<dbReference type="FunFam" id="3.40.50.880:FF:000001">
    <property type="entry name" value="GMP synthase [glutamine-hydrolyzing]"/>
    <property type="match status" value="1"/>
</dbReference>
<dbReference type="Gene3D" id="3.30.300.10">
    <property type="match status" value="1"/>
</dbReference>
<dbReference type="Gene3D" id="3.40.50.880">
    <property type="match status" value="1"/>
</dbReference>
<dbReference type="Gene3D" id="3.40.50.620">
    <property type="entry name" value="HUPs"/>
    <property type="match status" value="1"/>
</dbReference>
<dbReference type="HAMAP" id="MF_00344">
    <property type="entry name" value="GMP_synthase"/>
    <property type="match status" value="1"/>
</dbReference>
<dbReference type="InterPro" id="IPR029062">
    <property type="entry name" value="Class_I_gatase-like"/>
</dbReference>
<dbReference type="InterPro" id="IPR017926">
    <property type="entry name" value="GATASE"/>
</dbReference>
<dbReference type="InterPro" id="IPR001674">
    <property type="entry name" value="GMP_synth_C"/>
</dbReference>
<dbReference type="InterPro" id="IPR004739">
    <property type="entry name" value="GMP_synth_GATase"/>
</dbReference>
<dbReference type="InterPro" id="IPR022955">
    <property type="entry name" value="GMP_synthase"/>
</dbReference>
<dbReference type="InterPro" id="IPR025777">
    <property type="entry name" value="GMPS_ATP_PPase_dom"/>
</dbReference>
<dbReference type="InterPro" id="IPR022310">
    <property type="entry name" value="NAD/GMP_synthase"/>
</dbReference>
<dbReference type="InterPro" id="IPR014729">
    <property type="entry name" value="Rossmann-like_a/b/a_fold"/>
</dbReference>
<dbReference type="NCBIfam" id="TIGR00884">
    <property type="entry name" value="guaA_Cterm"/>
    <property type="match status" value="1"/>
</dbReference>
<dbReference type="NCBIfam" id="TIGR00888">
    <property type="entry name" value="guaA_Nterm"/>
    <property type="match status" value="1"/>
</dbReference>
<dbReference type="NCBIfam" id="NF000848">
    <property type="entry name" value="PRK00074.1"/>
    <property type="match status" value="1"/>
</dbReference>
<dbReference type="PANTHER" id="PTHR11922:SF2">
    <property type="entry name" value="GMP SYNTHASE [GLUTAMINE-HYDROLYZING]"/>
    <property type="match status" value="1"/>
</dbReference>
<dbReference type="PANTHER" id="PTHR11922">
    <property type="entry name" value="GMP SYNTHASE-RELATED"/>
    <property type="match status" value="1"/>
</dbReference>
<dbReference type="Pfam" id="PF00117">
    <property type="entry name" value="GATase"/>
    <property type="match status" value="1"/>
</dbReference>
<dbReference type="Pfam" id="PF00958">
    <property type="entry name" value="GMP_synt_C"/>
    <property type="match status" value="1"/>
</dbReference>
<dbReference type="Pfam" id="PF02540">
    <property type="entry name" value="NAD_synthase"/>
    <property type="match status" value="1"/>
</dbReference>
<dbReference type="PRINTS" id="PR00096">
    <property type="entry name" value="GATASE"/>
</dbReference>
<dbReference type="SUPFAM" id="SSF52402">
    <property type="entry name" value="Adenine nucleotide alpha hydrolases-like"/>
    <property type="match status" value="1"/>
</dbReference>
<dbReference type="SUPFAM" id="SSF52317">
    <property type="entry name" value="Class I glutamine amidotransferase-like"/>
    <property type="match status" value="1"/>
</dbReference>
<dbReference type="SUPFAM" id="SSF54810">
    <property type="entry name" value="GMP synthetase C-terminal dimerisation domain"/>
    <property type="match status" value="1"/>
</dbReference>
<dbReference type="PROSITE" id="PS51273">
    <property type="entry name" value="GATASE_TYPE_1"/>
    <property type="match status" value="1"/>
</dbReference>
<dbReference type="PROSITE" id="PS51553">
    <property type="entry name" value="GMPS_ATP_PPASE"/>
    <property type="match status" value="1"/>
</dbReference>
<name>GUAA_SINFN</name>
<reference key="1">
    <citation type="journal article" date="2009" name="Appl. Environ. Microbiol.">
        <title>Rhizobium sp. strain NGR234 possesses a remarkable number of secretion systems.</title>
        <authorList>
            <person name="Schmeisser C."/>
            <person name="Liesegang H."/>
            <person name="Krysciak D."/>
            <person name="Bakkou N."/>
            <person name="Le Quere A."/>
            <person name="Wollherr A."/>
            <person name="Heinemeyer I."/>
            <person name="Morgenstern B."/>
            <person name="Pommerening-Roeser A."/>
            <person name="Flores M."/>
            <person name="Palacios R."/>
            <person name="Brenner S."/>
            <person name="Gottschalk G."/>
            <person name="Schmitz R.A."/>
            <person name="Broughton W.J."/>
            <person name="Perret X."/>
            <person name="Strittmatter A.W."/>
            <person name="Streit W.R."/>
        </authorList>
    </citation>
    <scope>NUCLEOTIDE SEQUENCE [LARGE SCALE GENOMIC DNA]</scope>
    <source>
        <strain>NBRC 101917 / NGR234</strain>
    </source>
</reference>
<evidence type="ECO:0000255" key="1">
    <source>
        <dbReference type="HAMAP-Rule" id="MF_00344"/>
    </source>
</evidence>
<proteinExistence type="inferred from homology"/>
<sequence length="520" mass="57112">MTQTAHPDTVLIVDFGSQVTQLIARRVREAGVYCEIVPFQSAEEGFKRLKPKAVILSGSPASTLDIGSPRAPSVIFESGLPVFGICYGQQTMCAQLGGKVESGHHREFGRAFLEVEKDCALFDGLWSLGSRHQVWMSHGDRVTALPEGFEVVATSSNAPFAFIADETRKYYAVQFHPEVVHTPDGAKLISNFVHKIAGIKGDWTMSAYRAKAVEAIRKQVGGKKVICALSGGVDSSVAALLIHEAVGDQLTCILVDHGLMRKDEAANVVAMFQEHYNLHLLHIDASDRFIGELEGVSDPETKRKIIGRLFIEVFEEEAKKLGGADFLAQGTLYPDVIESVSFTGGPSVTIKSHHNVGGLPERMNMQLVEPLRELFKDEVRVLGRELGLPESFIGRHPFPGPGLAIRCPGGISREKLEILREADAIYLDEIRKAGLYDAIWQAFAVLLPVQTVGVMGDGRTYEFVCALRAVTSVDGMTADFYHYDMEFLGRAATRIINEVRGINRVVYDVTSKPPGTIEWE</sequence>
<comment type="function">
    <text evidence="1">Catalyzes the synthesis of GMP from XMP.</text>
</comment>
<comment type="catalytic activity">
    <reaction evidence="1">
        <text>XMP + L-glutamine + ATP + H2O = GMP + L-glutamate + AMP + diphosphate + 2 H(+)</text>
        <dbReference type="Rhea" id="RHEA:11680"/>
        <dbReference type="ChEBI" id="CHEBI:15377"/>
        <dbReference type="ChEBI" id="CHEBI:15378"/>
        <dbReference type="ChEBI" id="CHEBI:29985"/>
        <dbReference type="ChEBI" id="CHEBI:30616"/>
        <dbReference type="ChEBI" id="CHEBI:33019"/>
        <dbReference type="ChEBI" id="CHEBI:57464"/>
        <dbReference type="ChEBI" id="CHEBI:58115"/>
        <dbReference type="ChEBI" id="CHEBI:58359"/>
        <dbReference type="ChEBI" id="CHEBI:456215"/>
        <dbReference type="EC" id="6.3.5.2"/>
    </reaction>
</comment>
<comment type="pathway">
    <text evidence="1">Purine metabolism; GMP biosynthesis; GMP from XMP (L-Gln route): step 1/1.</text>
</comment>
<comment type="subunit">
    <text evidence="1">Homodimer.</text>
</comment>
<gene>
    <name evidence="1" type="primary">guaA</name>
    <name type="ordered locus">NGR_c36520</name>
</gene>
<accession>C3MCS5</accession>
<feature type="chain" id="PRO_1000190252" description="GMP synthase [glutamine-hydrolyzing]">
    <location>
        <begin position="1"/>
        <end position="520"/>
    </location>
</feature>
<feature type="domain" description="Glutamine amidotransferase type-1" evidence="1">
    <location>
        <begin position="9"/>
        <end position="202"/>
    </location>
</feature>
<feature type="domain" description="GMPS ATP-PPase" evidence="1">
    <location>
        <begin position="203"/>
        <end position="395"/>
    </location>
</feature>
<feature type="active site" description="Nucleophile" evidence="1">
    <location>
        <position position="86"/>
    </location>
</feature>
<feature type="active site" evidence="1">
    <location>
        <position position="176"/>
    </location>
</feature>
<feature type="active site" evidence="1">
    <location>
        <position position="178"/>
    </location>
</feature>
<feature type="binding site" evidence="1">
    <location>
        <begin position="230"/>
        <end position="236"/>
    </location>
    <ligand>
        <name>ATP</name>
        <dbReference type="ChEBI" id="CHEBI:30616"/>
    </ligand>
</feature>
<organism>
    <name type="scientific">Sinorhizobium fredii (strain NBRC 101917 / NGR234)</name>
    <dbReference type="NCBI Taxonomy" id="394"/>
    <lineage>
        <taxon>Bacteria</taxon>
        <taxon>Pseudomonadati</taxon>
        <taxon>Pseudomonadota</taxon>
        <taxon>Alphaproteobacteria</taxon>
        <taxon>Hyphomicrobiales</taxon>
        <taxon>Rhizobiaceae</taxon>
        <taxon>Sinorhizobium/Ensifer group</taxon>
        <taxon>Sinorhizobium</taxon>
    </lineage>
</organism>
<protein>
    <recommendedName>
        <fullName evidence="1">GMP synthase [glutamine-hydrolyzing]</fullName>
        <ecNumber evidence="1">6.3.5.2</ecNumber>
    </recommendedName>
    <alternativeName>
        <fullName evidence="1">GMP synthetase</fullName>
    </alternativeName>
    <alternativeName>
        <fullName evidence="1">Glutamine amidotransferase</fullName>
    </alternativeName>
</protein>